<organism>
    <name type="scientific">Geobacillus thermodenitrificans (strain NG80-2)</name>
    <dbReference type="NCBI Taxonomy" id="420246"/>
    <lineage>
        <taxon>Bacteria</taxon>
        <taxon>Bacillati</taxon>
        <taxon>Bacillota</taxon>
        <taxon>Bacilli</taxon>
        <taxon>Bacillales</taxon>
        <taxon>Anoxybacillaceae</taxon>
        <taxon>Geobacillus</taxon>
    </lineage>
</organism>
<accession>A4IMI5</accession>
<dbReference type="EC" id="2.5.1.75" evidence="1"/>
<dbReference type="EMBL" id="CP000557">
    <property type="protein sequence ID" value="ABO66539.1"/>
    <property type="molecule type" value="Genomic_DNA"/>
</dbReference>
<dbReference type="RefSeq" id="WP_011887177.1">
    <property type="nucleotide sequence ID" value="NC_009328.1"/>
</dbReference>
<dbReference type="SMR" id="A4IMI5"/>
<dbReference type="KEGG" id="gtn:GTNG_1167"/>
<dbReference type="eggNOG" id="COG0324">
    <property type="taxonomic scope" value="Bacteria"/>
</dbReference>
<dbReference type="HOGENOM" id="CLU_032616_0_1_9"/>
<dbReference type="Proteomes" id="UP000001578">
    <property type="component" value="Chromosome"/>
</dbReference>
<dbReference type="GO" id="GO:0005524">
    <property type="term" value="F:ATP binding"/>
    <property type="evidence" value="ECO:0007669"/>
    <property type="project" value="UniProtKB-UniRule"/>
</dbReference>
<dbReference type="GO" id="GO:0052381">
    <property type="term" value="F:tRNA dimethylallyltransferase activity"/>
    <property type="evidence" value="ECO:0007669"/>
    <property type="project" value="UniProtKB-UniRule"/>
</dbReference>
<dbReference type="GO" id="GO:0006400">
    <property type="term" value="P:tRNA modification"/>
    <property type="evidence" value="ECO:0007669"/>
    <property type="project" value="TreeGrafter"/>
</dbReference>
<dbReference type="FunFam" id="1.10.20.140:FF:000001">
    <property type="entry name" value="tRNA dimethylallyltransferase"/>
    <property type="match status" value="1"/>
</dbReference>
<dbReference type="Gene3D" id="1.10.20.140">
    <property type="match status" value="1"/>
</dbReference>
<dbReference type="Gene3D" id="3.40.50.300">
    <property type="entry name" value="P-loop containing nucleotide triphosphate hydrolases"/>
    <property type="match status" value="1"/>
</dbReference>
<dbReference type="HAMAP" id="MF_00185">
    <property type="entry name" value="IPP_trans"/>
    <property type="match status" value="1"/>
</dbReference>
<dbReference type="InterPro" id="IPR039657">
    <property type="entry name" value="Dimethylallyltransferase"/>
</dbReference>
<dbReference type="InterPro" id="IPR018022">
    <property type="entry name" value="IPT"/>
</dbReference>
<dbReference type="InterPro" id="IPR027417">
    <property type="entry name" value="P-loop_NTPase"/>
</dbReference>
<dbReference type="NCBIfam" id="TIGR00174">
    <property type="entry name" value="miaA"/>
    <property type="match status" value="1"/>
</dbReference>
<dbReference type="PANTHER" id="PTHR11088">
    <property type="entry name" value="TRNA DIMETHYLALLYLTRANSFERASE"/>
    <property type="match status" value="1"/>
</dbReference>
<dbReference type="PANTHER" id="PTHR11088:SF60">
    <property type="entry name" value="TRNA DIMETHYLALLYLTRANSFERASE"/>
    <property type="match status" value="1"/>
</dbReference>
<dbReference type="Pfam" id="PF01715">
    <property type="entry name" value="IPPT"/>
    <property type="match status" value="1"/>
</dbReference>
<dbReference type="SUPFAM" id="SSF52540">
    <property type="entry name" value="P-loop containing nucleoside triphosphate hydrolases"/>
    <property type="match status" value="2"/>
</dbReference>
<proteinExistence type="inferred from homology"/>
<sequence length="315" mass="35934">MTEKIVVIVGPTEVGKTKLGIALAKKLGGEIISGDSMQIYKGMDIGTAKVKPDEMEGVPHHLLDIKEPCEPFSVVEFQRLARALITDISARGRLPIIVGGTGLYIQAAIYDYRFSDAPSDEAYRRALRQLAAEQGAEALHEQLKAVDPESAARIHPNNVRRVIRALEVYHCTGKPFSEWQRGQQRQLLYETALIGLTAERSVLYRRINERVDEMIAEGLIEEVRSLYDRGLRDCQAVQAIGYKELYDYFDGRVSLDEAIEQLKQNSRRYAKRQLTWFRNQMPVEWFDMTDPEKFAVKVEEIFRYIAGKLRLEANI</sequence>
<name>MIAA_GEOTN</name>
<comment type="function">
    <text evidence="1">Catalyzes the transfer of a dimethylallyl group onto the adenine at position 37 in tRNAs that read codons beginning with uridine, leading to the formation of N6-(dimethylallyl)adenosine (i(6)A).</text>
</comment>
<comment type="catalytic activity">
    <reaction evidence="1">
        <text>adenosine(37) in tRNA + dimethylallyl diphosphate = N(6)-dimethylallyladenosine(37) in tRNA + diphosphate</text>
        <dbReference type="Rhea" id="RHEA:26482"/>
        <dbReference type="Rhea" id="RHEA-COMP:10162"/>
        <dbReference type="Rhea" id="RHEA-COMP:10375"/>
        <dbReference type="ChEBI" id="CHEBI:33019"/>
        <dbReference type="ChEBI" id="CHEBI:57623"/>
        <dbReference type="ChEBI" id="CHEBI:74411"/>
        <dbReference type="ChEBI" id="CHEBI:74415"/>
        <dbReference type="EC" id="2.5.1.75"/>
    </reaction>
</comment>
<comment type="cofactor">
    <cofactor evidence="1">
        <name>Mg(2+)</name>
        <dbReference type="ChEBI" id="CHEBI:18420"/>
    </cofactor>
</comment>
<comment type="subunit">
    <text evidence="1">Monomer.</text>
</comment>
<comment type="similarity">
    <text evidence="1">Belongs to the IPP transferase family.</text>
</comment>
<reference key="1">
    <citation type="journal article" date="2007" name="Proc. Natl. Acad. Sci. U.S.A.">
        <title>Genome and proteome of long-chain alkane degrading Geobacillus thermodenitrificans NG80-2 isolated from a deep-subsurface oil reservoir.</title>
        <authorList>
            <person name="Feng L."/>
            <person name="Wang W."/>
            <person name="Cheng J."/>
            <person name="Ren Y."/>
            <person name="Zhao G."/>
            <person name="Gao C."/>
            <person name="Tang Y."/>
            <person name="Liu X."/>
            <person name="Han W."/>
            <person name="Peng X."/>
            <person name="Liu R."/>
            <person name="Wang L."/>
        </authorList>
    </citation>
    <scope>NUCLEOTIDE SEQUENCE [LARGE SCALE GENOMIC DNA]</scope>
    <source>
        <strain>NG80-2</strain>
    </source>
</reference>
<protein>
    <recommendedName>
        <fullName evidence="1">tRNA dimethylallyltransferase</fullName>
        <ecNumber evidence="1">2.5.1.75</ecNumber>
    </recommendedName>
    <alternativeName>
        <fullName evidence="1">Dimethylallyl diphosphate:tRNA dimethylallyltransferase</fullName>
        <shortName evidence="1">DMAPP:tRNA dimethylallyltransferase</shortName>
        <shortName evidence="1">DMATase</shortName>
    </alternativeName>
    <alternativeName>
        <fullName evidence="1">Isopentenyl-diphosphate:tRNA isopentenyltransferase</fullName>
        <shortName evidence="1">IPP transferase</shortName>
        <shortName evidence="1">IPPT</shortName>
        <shortName evidence="1">IPTase</shortName>
    </alternativeName>
</protein>
<gene>
    <name evidence="1" type="primary">miaA</name>
    <name type="ordered locus">GTNG_1167</name>
</gene>
<keyword id="KW-0067">ATP-binding</keyword>
<keyword id="KW-0460">Magnesium</keyword>
<keyword id="KW-0547">Nucleotide-binding</keyword>
<keyword id="KW-0808">Transferase</keyword>
<keyword id="KW-0819">tRNA processing</keyword>
<feature type="chain" id="PRO_1000020604" description="tRNA dimethylallyltransferase">
    <location>
        <begin position="1"/>
        <end position="315"/>
    </location>
</feature>
<feature type="region of interest" description="Interaction with substrate tRNA" evidence="1">
    <location>
        <begin position="35"/>
        <end position="38"/>
    </location>
</feature>
<feature type="binding site" evidence="1">
    <location>
        <begin position="10"/>
        <end position="17"/>
    </location>
    <ligand>
        <name>ATP</name>
        <dbReference type="ChEBI" id="CHEBI:30616"/>
    </ligand>
</feature>
<feature type="binding site" evidence="1">
    <location>
        <begin position="12"/>
        <end position="17"/>
    </location>
    <ligand>
        <name>substrate</name>
    </ligand>
</feature>
<feature type="site" description="Interaction with substrate tRNA" evidence="1">
    <location>
        <position position="101"/>
    </location>
</feature>
<feature type="site" description="Interaction with substrate tRNA" evidence="1">
    <location>
        <position position="124"/>
    </location>
</feature>
<evidence type="ECO:0000255" key="1">
    <source>
        <dbReference type="HAMAP-Rule" id="MF_00185"/>
    </source>
</evidence>